<keyword id="KW-0108">Calcium channel impairing toxin</keyword>
<keyword id="KW-0123">Cardiotoxin</keyword>
<keyword id="KW-0903">Direct protein sequencing</keyword>
<keyword id="KW-1015">Disulfide bond</keyword>
<keyword id="KW-0872">Ion channel impairing toxin</keyword>
<keyword id="KW-0964">Secreted</keyword>
<keyword id="KW-0800">Toxin</keyword>
<keyword id="KW-1218">Voltage-gated calcium channel impairing toxin</keyword>
<feature type="chain" id="PRO_0000093663" description="Toxin S4C8" evidence="3">
    <location>
        <begin position="1"/>
        <end position="60"/>
    </location>
</feature>
<feature type="region of interest" description="Important for binding to L-type calcium channels" evidence="1">
    <location>
        <begin position="41"/>
        <end position="48"/>
    </location>
</feature>
<feature type="disulfide bond" evidence="2">
    <location>
        <begin position="3"/>
        <end position="22"/>
    </location>
</feature>
<feature type="disulfide bond" evidence="2">
    <location>
        <begin position="17"/>
        <end position="39"/>
    </location>
</feature>
<feature type="disulfide bond" evidence="2">
    <location>
        <begin position="41"/>
        <end position="52"/>
    </location>
</feature>
<feature type="disulfide bond" evidence="2">
    <location>
        <begin position="53"/>
        <end position="58"/>
    </location>
</feature>
<evidence type="ECO:0000250" key="1">
    <source>
        <dbReference type="UniProtKB" id="P01414"/>
    </source>
</evidence>
<evidence type="ECO:0000250" key="2">
    <source>
        <dbReference type="UniProtKB" id="P0C1Z0"/>
    </source>
</evidence>
<evidence type="ECO:0000269" key="3">
    <source>
    </source>
</evidence>
<evidence type="ECO:0000305" key="4"/>
<name>3SL8_DENJA</name>
<organism>
    <name type="scientific">Dendroaspis jamesoni kaimosae</name>
    <name type="common">Eastern Jameson's mamba</name>
    <dbReference type="NCBI Taxonomy" id="8619"/>
    <lineage>
        <taxon>Eukaryota</taxon>
        <taxon>Metazoa</taxon>
        <taxon>Chordata</taxon>
        <taxon>Craniata</taxon>
        <taxon>Vertebrata</taxon>
        <taxon>Euteleostomi</taxon>
        <taxon>Lepidosauria</taxon>
        <taxon>Squamata</taxon>
        <taxon>Bifurcata</taxon>
        <taxon>Unidentata</taxon>
        <taxon>Episquamata</taxon>
        <taxon>Toxicofera</taxon>
        <taxon>Serpentes</taxon>
        <taxon>Colubroidea</taxon>
        <taxon>Elapidae</taxon>
        <taxon>Elapinae</taxon>
        <taxon>Dendroaspis</taxon>
    </lineage>
</organism>
<protein>
    <recommendedName>
        <fullName>Toxin S4C8</fullName>
    </recommendedName>
</protein>
<sequence length="60" mass="6968">RICYTHKSLQAKTTKSCEGNTCYKMFIRTSREYISERGCGCPTAMWPYQTECCKGDRCNK</sequence>
<comment type="function">
    <text evidence="1">This specific blocker of the L-type calcium channel (Cav1/CACNA1) is a smooth muscle relaxant and an inhibitor of cardiac contractions.</text>
</comment>
<comment type="subcellular location">
    <subcellularLocation>
        <location evidence="3">Secreted</location>
    </subcellularLocation>
</comment>
<comment type="tissue specificity">
    <text evidence="4">Expressed by the venom gland.</text>
</comment>
<comment type="toxic dose">
    <text evidence="3">LD(50) is 13.7 mg/kg by intravenous injection.</text>
</comment>
<comment type="similarity">
    <text evidence="4">Belongs to the three-finger toxin family. Short-chain subfamily. L-type calcium blocker sub-subfamily.</text>
</comment>
<accession>P25683</accession>
<reference key="1">
    <citation type="journal article" date="1980" name="Int. J. Biochem.">
        <title>The primary structure of a short neurotoxin homologue (S4C8) from Dendroaspis jamesoni kaimosae (Jameson's mamba) venom.</title>
        <authorList>
            <person name="Joubert F.J."/>
            <person name="Taljaard N."/>
        </authorList>
    </citation>
    <scope>PROTEIN SEQUENCE</scope>
    <scope>TOXIC DOSE</scope>
    <scope>SUBCELLULAR LOCATION</scope>
    <source>
        <tissue>Venom</tissue>
    </source>
</reference>
<proteinExistence type="evidence at protein level"/>
<dbReference type="SMR" id="P25683"/>
<dbReference type="GO" id="GO:0005576">
    <property type="term" value="C:extracellular region"/>
    <property type="evidence" value="ECO:0007669"/>
    <property type="project" value="UniProtKB-SubCell"/>
</dbReference>
<dbReference type="GO" id="GO:0005246">
    <property type="term" value="F:calcium channel regulator activity"/>
    <property type="evidence" value="ECO:0007669"/>
    <property type="project" value="UniProtKB-KW"/>
</dbReference>
<dbReference type="GO" id="GO:0090729">
    <property type="term" value="F:toxin activity"/>
    <property type="evidence" value="ECO:0007669"/>
    <property type="project" value="UniProtKB-KW"/>
</dbReference>
<dbReference type="CDD" id="cd00206">
    <property type="entry name" value="TFP_snake_toxin"/>
    <property type="match status" value="1"/>
</dbReference>
<dbReference type="Gene3D" id="2.10.60.10">
    <property type="entry name" value="CD59"/>
    <property type="match status" value="1"/>
</dbReference>
<dbReference type="InterPro" id="IPR003571">
    <property type="entry name" value="Snake_3FTx"/>
</dbReference>
<dbReference type="InterPro" id="IPR045860">
    <property type="entry name" value="Snake_toxin-like_sf"/>
</dbReference>
<dbReference type="InterPro" id="IPR018354">
    <property type="entry name" value="Snake_toxin_con_site"/>
</dbReference>
<dbReference type="InterPro" id="IPR054131">
    <property type="entry name" value="Toxin_cobra-type"/>
</dbReference>
<dbReference type="Pfam" id="PF21947">
    <property type="entry name" value="Toxin_cobra-type"/>
    <property type="match status" value="1"/>
</dbReference>
<dbReference type="SUPFAM" id="SSF57302">
    <property type="entry name" value="Snake toxin-like"/>
    <property type="match status" value="1"/>
</dbReference>
<dbReference type="PROSITE" id="PS00272">
    <property type="entry name" value="SNAKE_TOXIN"/>
    <property type="match status" value="1"/>
</dbReference>